<sequence length="187" mass="20690">MICGTDEAGRGPIAGPVVAAAVILDPDNPIEGLNDSKKLSEKKREKLSLEIKEKALYWAIAQSDPDEIEAINILWASMKAMQRAVEALPVKPDMVLVDGNRVPELKVPAKAIVGGDASEQCIAAASILAKVERDRQMLKWHELYPQYEFDKHKAYGTPKHLELLEKHGPCPIHRKGFNPVKRLLANL</sequence>
<evidence type="ECO:0000255" key="1">
    <source>
        <dbReference type="HAMAP-Rule" id="MF_00052"/>
    </source>
</evidence>
<evidence type="ECO:0000255" key="2">
    <source>
        <dbReference type="PROSITE-ProRule" id="PRU01319"/>
    </source>
</evidence>
<keyword id="KW-0963">Cytoplasm</keyword>
<keyword id="KW-0255">Endonuclease</keyword>
<keyword id="KW-0378">Hydrolase</keyword>
<keyword id="KW-0464">Manganese</keyword>
<keyword id="KW-0479">Metal-binding</keyword>
<keyword id="KW-0540">Nuclease</keyword>
<keyword id="KW-1185">Reference proteome</keyword>
<accession>Q5QZK7</accession>
<reference key="1">
    <citation type="journal article" date="2004" name="Proc. Natl. Acad. Sci. U.S.A.">
        <title>Genome sequence of the deep-sea gamma-proteobacterium Idiomarina loihiensis reveals amino acid fermentation as a source of carbon and energy.</title>
        <authorList>
            <person name="Hou S."/>
            <person name="Saw J.H."/>
            <person name="Lee K.S."/>
            <person name="Freitas T.A."/>
            <person name="Belisle C."/>
            <person name="Kawarabayasi Y."/>
            <person name="Donachie S.P."/>
            <person name="Pikina A."/>
            <person name="Galperin M.Y."/>
            <person name="Koonin E.V."/>
            <person name="Makarova K.S."/>
            <person name="Omelchenko M.V."/>
            <person name="Sorokin A."/>
            <person name="Wolf Y.I."/>
            <person name="Li Q.X."/>
            <person name="Keum Y.S."/>
            <person name="Campbell S."/>
            <person name="Denery J."/>
            <person name="Aizawa S."/>
            <person name="Shibata S."/>
            <person name="Malahoff A."/>
            <person name="Alam M."/>
        </authorList>
    </citation>
    <scope>NUCLEOTIDE SEQUENCE [LARGE SCALE GENOMIC DNA]</scope>
    <source>
        <strain>ATCC BAA-735 / DSM 15497 / L2-TR</strain>
    </source>
</reference>
<comment type="function">
    <text evidence="1">Endonuclease that specifically degrades the RNA of RNA-DNA hybrids.</text>
</comment>
<comment type="catalytic activity">
    <reaction evidence="1">
        <text>Endonucleolytic cleavage to 5'-phosphomonoester.</text>
        <dbReference type="EC" id="3.1.26.4"/>
    </reaction>
</comment>
<comment type="cofactor">
    <cofactor evidence="1">
        <name>Mn(2+)</name>
        <dbReference type="ChEBI" id="CHEBI:29035"/>
    </cofactor>
    <cofactor evidence="1">
        <name>Mg(2+)</name>
        <dbReference type="ChEBI" id="CHEBI:18420"/>
    </cofactor>
    <text evidence="1">Manganese or magnesium. Binds 1 divalent metal ion per monomer in the absence of substrate. May bind a second metal ion after substrate binding.</text>
</comment>
<comment type="subcellular location">
    <subcellularLocation>
        <location evidence="1">Cytoplasm</location>
    </subcellularLocation>
</comment>
<comment type="similarity">
    <text evidence="1">Belongs to the RNase HII family.</text>
</comment>
<gene>
    <name evidence="1" type="primary">rnhB</name>
    <name type="ordered locus">IL1670</name>
</gene>
<organism>
    <name type="scientific">Idiomarina loihiensis (strain ATCC BAA-735 / DSM 15497 / L2-TR)</name>
    <dbReference type="NCBI Taxonomy" id="283942"/>
    <lineage>
        <taxon>Bacteria</taxon>
        <taxon>Pseudomonadati</taxon>
        <taxon>Pseudomonadota</taxon>
        <taxon>Gammaproteobacteria</taxon>
        <taxon>Alteromonadales</taxon>
        <taxon>Idiomarinaceae</taxon>
        <taxon>Idiomarina</taxon>
    </lineage>
</organism>
<dbReference type="EC" id="3.1.26.4" evidence="1"/>
<dbReference type="EMBL" id="AE017340">
    <property type="protein sequence ID" value="AAV82503.1"/>
    <property type="molecule type" value="Genomic_DNA"/>
</dbReference>
<dbReference type="SMR" id="Q5QZK7"/>
<dbReference type="STRING" id="283942.IL1670"/>
<dbReference type="KEGG" id="ilo:IL1670"/>
<dbReference type="eggNOG" id="COG0164">
    <property type="taxonomic scope" value="Bacteria"/>
</dbReference>
<dbReference type="HOGENOM" id="CLU_036532_3_2_6"/>
<dbReference type="Proteomes" id="UP000001171">
    <property type="component" value="Chromosome"/>
</dbReference>
<dbReference type="GO" id="GO:0005737">
    <property type="term" value="C:cytoplasm"/>
    <property type="evidence" value="ECO:0007669"/>
    <property type="project" value="UniProtKB-SubCell"/>
</dbReference>
<dbReference type="GO" id="GO:0032299">
    <property type="term" value="C:ribonuclease H2 complex"/>
    <property type="evidence" value="ECO:0007669"/>
    <property type="project" value="TreeGrafter"/>
</dbReference>
<dbReference type="GO" id="GO:0030145">
    <property type="term" value="F:manganese ion binding"/>
    <property type="evidence" value="ECO:0007669"/>
    <property type="project" value="UniProtKB-UniRule"/>
</dbReference>
<dbReference type="GO" id="GO:0003723">
    <property type="term" value="F:RNA binding"/>
    <property type="evidence" value="ECO:0007669"/>
    <property type="project" value="InterPro"/>
</dbReference>
<dbReference type="GO" id="GO:0004523">
    <property type="term" value="F:RNA-DNA hybrid ribonuclease activity"/>
    <property type="evidence" value="ECO:0007669"/>
    <property type="project" value="UniProtKB-UniRule"/>
</dbReference>
<dbReference type="GO" id="GO:0043137">
    <property type="term" value="P:DNA replication, removal of RNA primer"/>
    <property type="evidence" value="ECO:0007669"/>
    <property type="project" value="TreeGrafter"/>
</dbReference>
<dbReference type="GO" id="GO:0006298">
    <property type="term" value="P:mismatch repair"/>
    <property type="evidence" value="ECO:0007669"/>
    <property type="project" value="TreeGrafter"/>
</dbReference>
<dbReference type="CDD" id="cd07182">
    <property type="entry name" value="RNase_HII_bacteria_HII_like"/>
    <property type="match status" value="1"/>
</dbReference>
<dbReference type="FunFam" id="3.30.420.10:FF:000006">
    <property type="entry name" value="Ribonuclease HII"/>
    <property type="match status" value="1"/>
</dbReference>
<dbReference type="Gene3D" id="3.30.420.10">
    <property type="entry name" value="Ribonuclease H-like superfamily/Ribonuclease H"/>
    <property type="match status" value="1"/>
</dbReference>
<dbReference type="HAMAP" id="MF_00052_B">
    <property type="entry name" value="RNase_HII_B"/>
    <property type="match status" value="1"/>
</dbReference>
<dbReference type="InterPro" id="IPR022898">
    <property type="entry name" value="RNase_HII"/>
</dbReference>
<dbReference type="InterPro" id="IPR001352">
    <property type="entry name" value="RNase_HII/HIII"/>
</dbReference>
<dbReference type="InterPro" id="IPR024567">
    <property type="entry name" value="RNase_HII/HIII_dom"/>
</dbReference>
<dbReference type="InterPro" id="IPR012337">
    <property type="entry name" value="RNaseH-like_sf"/>
</dbReference>
<dbReference type="InterPro" id="IPR036397">
    <property type="entry name" value="RNaseH_sf"/>
</dbReference>
<dbReference type="NCBIfam" id="NF000594">
    <property type="entry name" value="PRK00015.1-1"/>
    <property type="match status" value="1"/>
</dbReference>
<dbReference type="NCBIfam" id="NF000595">
    <property type="entry name" value="PRK00015.1-3"/>
    <property type="match status" value="1"/>
</dbReference>
<dbReference type="NCBIfam" id="NF000596">
    <property type="entry name" value="PRK00015.1-4"/>
    <property type="match status" value="1"/>
</dbReference>
<dbReference type="PANTHER" id="PTHR10954">
    <property type="entry name" value="RIBONUCLEASE H2 SUBUNIT A"/>
    <property type="match status" value="1"/>
</dbReference>
<dbReference type="PANTHER" id="PTHR10954:SF18">
    <property type="entry name" value="RIBONUCLEASE HII"/>
    <property type="match status" value="1"/>
</dbReference>
<dbReference type="Pfam" id="PF01351">
    <property type="entry name" value="RNase_HII"/>
    <property type="match status" value="1"/>
</dbReference>
<dbReference type="SUPFAM" id="SSF53098">
    <property type="entry name" value="Ribonuclease H-like"/>
    <property type="match status" value="1"/>
</dbReference>
<dbReference type="PROSITE" id="PS51975">
    <property type="entry name" value="RNASE_H_2"/>
    <property type="match status" value="1"/>
</dbReference>
<feature type="chain" id="PRO_0000235731" description="Ribonuclease HII">
    <location>
        <begin position="1"/>
        <end position="187"/>
    </location>
</feature>
<feature type="domain" description="RNase H type-2" evidence="2">
    <location>
        <begin position="1"/>
        <end position="187"/>
    </location>
</feature>
<feature type="binding site" evidence="1">
    <location>
        <position position="6"/>
    </location>
    <ligand>
        <name>a divalent metal cation</name>
        <dbReference type="ChEBI" id="CHEBI:60240"/>
    </ligand>
</feature>
<feature type="binding site" evidence="1">
    <location>
        <position position="7"/>
    </location>
    <ligand>
        <name>a divalent metal cation</name>
        <dbReference type="ChEBI" id="CHEBI:60240"/>
    </ligand>
</feature>
<feature type="binding site" evidence="1">
    <location>
        <position position="98"/>
    </location>
    <ligand>
        <name>a divalent metal cation</name>
        <dbReference type="ChEBI" id="CHEBI:60240"/>
    </ligand>
</feature>
<name>RNH2_IDILO</name>
<proteinExistence type="inferred from homology"/>
<protein>
    <recommendedName>
        <fullName evidence="1">Ribonuclease HII</fullName>
        <shortName evidence="1">RNase HII</shortName>
        <ecNumber evidence="1">3.1.26.4</ecNumber>
    </recommendedName>
</protein>